<accession>B0KGP8</accession>
<reference key="1">
    <citation type="submission" date="2008-01" db="EMBL/GenBank/DDBJ databases">
        <title>Complete sequence of Pseudomonas putida GB-1.</title>
        <authorList>
            <consortium name="US DOE Joint Genome Institute"/>
            <person name="Copeland A."/>
            <person name="Lucas S."/>
            <person name="Lapidus A."/>
            <person name="Barry K."/>
            <person name="Glavina del Rio T."/>
            <person name="Dalin E."/>
            <person name="Tice H."/>
            <person name="Pitluck S."/>
            <person name="Bruce D."/>
            <person name="Goodwin L."/>
            <person name="Chertkov O."/>
            <person name="Brettin T."/>
            <person name="Detter J.C."/>
            <person name="Han C."/>
            <person name="Kuske C.R."/>
            <person name="Schmutz J."/>
            <person name="Larimer F."/>
            <person name="Land M."/>
            <person name="Hauser L."/>
            <person name="Kyrpides N."/>
            <person name="Kim E."/>
            <person name="McCarthy J.K."/>
            <person name="Richardson P."/>
        </authorList>
    </citation>
    <scope>NUCLEOTIDE SEQUENCE [LARGE SCALE GENOMIC DNA]</scope>
    <source>
        <strain>GB-1</strain>
    </source>
</reference>
<gene>
    <name evidence="1" type="primary">moaC</name>
    <name type="ordered locus">PputGB1_4557</name>
</gene>
<feature type="chain" id="PRO_1000085681" description="Cyclic pyranopterin monophosphate synthase">
    <location>
        <begin position="1"/>
        <end position="156"/>
    </location>
</feature>
<feature type="active site" evidence="1">
    <location>
        <position position="125"/>
    </location>
</feature>
<feature type="binding site" evidence="1">
    <location>
        <begin position="73"/>
        <end position="75"/>
    </location>
    <ligand>
        <name>substrate</name>
    </ligand>
</feature>
<feature type="binding site" evidence="1">
    <location>
        <begin position="110"/>
        <end position="111"/>
    </location>
    <ligand>
        <name>substrate</name>
    </ligand>
</feature>
<proteinExistence type="inferred from homology"/>
<organism>
    <name type="scientific">Pseudomonas putida (strain GB-1)</name>
    <dbReference type="NCBI Taxonomy" id="76869"/>
    <lineage>
        <taxon>Bacteria</taxon>
        <taxon>Pseudomonadati</taxon>
        <taxon>Pseudomonadota</taxon>
        <taxon>Gammaproteobacteria</taxon>
        <taxon>Pseudomonadales</taxon>
        <taxon>Pseudomonadaceae</taxon>
        <taxon>Pseudomonas</taxon>
    </lineage>
</organism>
<comment type="function">
    <text evidence="1">Catalyzes the conversion of (8S)-3',8-cyclo-7,8-dihydroguanosine 5'-triphosphate to cyclic pyranopterin monophosphate (cPMP).</text>
</comment>
<comment type="catalytic activity">
    <reaction evidence="1">
        <text>(8S)-3',8-cyclo-7,8-dihydroguanosine 5'-triphosphate = cyclic pyranopterin phosphate + diphosphate</text>
        <dbReference type="Rhea" id="RHEA:49580"/>
        <dbReference type="ChEBI" id="CHEBI:33019"/>
        <dbReference type="ChEBI" id="CHEBI:59648"/>
        <dbReference type="ChEBI" id="CHEBI:131766"/>
        <dbReference type="EC" id="4.6.1.17"/>
    </reaction>
</comment>
<comment type="pathway">
    <text evidence="1">Cofactor biosynthesis; molybdopterin biosynthesis.</text>
</comment>
<comment type="subunit">
    <text evidence="1">Homohexamer; trimer of dimers.</text>
</comment>
<comment type="similarity">
    <text evidence="1">Belongs to the MoaC family.</text>
</comment>
<name>MOAC_PSEPG</name>
<dbReference type="EC" id="4.6.1.17" evidence="1"/>
<dbReference type="EMBL" id="CP000926">
    <property type="protein sequence ID" value="ABZ00444.1"/>
    <property type="molecule type" value="Genomic_DNA"/>
</dbReference>
<dbReference type="RefSeq" id="WP_012274096.1">
    <property type="nucleotide sequence ID" value="NC_010322.1"/>
</dbReference>
<dbReference type="SMR" id="B0KGP8"/>
<dbReference type="KEGG" id="ppg:PputGB1_4557"/>
<dbReference type="eggNOG" id="COG0315">
    <property type="taxonomic scope" value="Bacteria"/>
</dbReference>
<dbReference type="HOGENOM" id="CLU_074693_1_1_6"/>
<dbReference type="UniPathway" id="UPA00344"/>
<dbReference type="Proteomes" id="UP000002157">
    <property type="component" value="Chromosome"/>
</dbReference>
<dbReference type="GO" id="GO:0061799">
    <property type="term" value="F:cyclic pyranopterin monophosphate synthase activity"/>
    <property type="evidence" value="ECO:0007669"/>
    <property type="project" value="UniProtKB-UniRule"/>
</dbReference>
<dbReference type="GO" id="GO:0006777">
    <property type="term" value="P:Mo-molybdopterin cofactor biosynthetic process"/>
    <property type="evidence" value="ECO:0007669"/>
    <property type="project" value="UniProtKB-UniRule"/>
</dbReference>
<dbReference type="CDD" id="cd01420">
    <property type="entry name" value="MoaC_PE"/>
    <property type="match status" value="1"/>
</dbReference>
<dbReference type="FunFam" id="3.30.70.640:FF:000001">
    <property type="entry name" value="Cyclic pyranopterin monophosphate synthase"/>
    <property type="match status" value="1"/>
</dbReference>
<dbReference type="Gene3D" id="3.30.70.640">
    <property type="entry name" value="Molybdopterin cofactor biosynthesis C (MoaC) domain"/>
    <property type="match status" value="1"/>
</dbReference>
<dbReference type="HAMAP" id="MF_01224_B">
    <property type="entry name" value="MoaC_B"/>
    <property type="match status" value="1"/>
</dbReference>
<dbReference type="InterPro" id="IPR023045">
    <property type="entry name" value="MoaC"/>
</dbReference>
<dbReference type="InterPro" id="IPR047594">
    <property type="entry name" value="MoaC_bact/euk"/>
</dbReference>
<dbReference type="InterPro" id="IPR036522">
    <property type="entry name" value="MoaC_sf"/>
</dbReference>
<dbReference type="InterPro" id="IPR050105">
    <property type="entry name" value="MoCo_biosynth_MoaA/MoaC"/>
</dbReference>
<dbReference type="InterPro" id="IPR002820">
    <property type="entry name" value="Mopterin_CF_biosynth-C_dom"/>
</dbReference>
<dbReference type="NCBIfam" id="TIGR00581">
    <property type="entry name" value="moaC"/>
    <property type="match status" value="1"/>
</dbReference>
<dbReference type="NCBIfam" id="NF006870">
    <property type="entry name" value="PRK09364.1"/>
    <property type="match status" value="1"/>
</dbReference>
<dbReference type="PANTHER" id="PTHR22960:SF29">
    <property type="entry name" value="CYCLIC PYRANOPTERIN MONOPHOSPHATE SYNTHASE"/>
    <property type="match status" value="1"/>
</dbReference>
<dbReference type="PANTHER" id="PTHR22960">
    <property type="entry name" value="MOLYBDOPTERIN COFACTOR SYNTHESIS PROTEIN A"/>
    <property type="match status" value="1"/>
</dbReference>
<dbReference type="Pfam" id="PF01967">
    <property type="entry name" value="MoaC"/>
    <property type="match status" value="1"/>
</dbReference>
<dbReference type="SUPFAM" id="SSF55040">
    <property type="entry name" value="Molybdenum cofactor biosynthesis protein C, MoaC"/>
    <property type="match status" value="1"/>
</dbReference>
<evidence type="ECO:0000255" key="1">
    <source>
        <dbReference type="HAMAP-Rule" id="MF_01224"/>
    </source>
</evidence>
<protein>
    <recommendedName>
        <fullName evidence="1">Cyclic pyranopterin monophosphate synthase</fullName>
        <ecNumber evidence="1">4.6.1.17</ecNumber>
    </recommendedName>
    <alternativeName>
        <fullName evidence="1">Molybdenum cofactor biosynthesis protein C</fullName>
    </alternativeName>
</protein>
<keyword id="KW-0456">Lyase</keyword>
<keyword id="KW-0501">Molybdenum cofactor biosynthesis</keyword>
<sequence>MLTHLDSQGRANMVDVTEKAVTEREATAEARVRMLPQTLQMIVDGEHPKGDVFAVARIAGIQAAKKTSDLIPLCHPLMLTSVKVELSAEGQDTVRIVARCKLAGQTGVEMEALTAASVAALTIYDMCKAVDKGMVIEQVRLLEKLGGKSGHYKVQA</sequence>